<proteinExistence type="inferred from homology"/>
<keyword id="KW-0413">Isomerase</keyword>
<name>Y1393_RHILO</name>
<sequence>MQTRNYLLYDVFTTERLAGNPLAVVLDCKGLDTIAMQAIAREFNLSETVFVLPPDNPKHKNRIRIFTPDYEMPFAGHPTVGSAIALAELAGESGAGIFVLEENIGPVRCAVSRHDGAAFAEFDLAKLPEPLQLEADPQAIGAALGLAPHEIGFENHRVAFWSAGVPYVTIPVANLEAAGRIRLDNQAWSELAPRKSEWAFASPYVYCRETVNHESAFHVRMIVPGTPSYEDPATGSAAAAFAGAIMHFDAPTDGISQLWIEQGLEMGRPSRIRLELTVQGGKLASARIGGHAVKVADGKLFI</sequence>
<gene>
    <name type="ordered locus">mll1393</name>
</gene>
<accession>Q98KN6</accession>
<protein>
    <recommendedName>
        <fullName>Uncharacterized isomerase mll1393</fullName>
        <ecNumber>5.1.-.-</ecNumber>
    </recommendedName>
</protein>
<dbReference type="EC" id="5.1.-.-"/>
<dbReference type="EMBL" id="BA000012">
    <property type="protein sequence ID" value="BAB48778.1"/>
    <property type="molecule type" value="Genomic_DNA"/>
</dbReference>
<dbReference type="RefSeq" id="WP_010910131.1">
    <property type="nucleotide sequence ID" value="NC_002678.2"/>
</dbReference>
<dbReference type="SMR" id="Q98KN6"/>
<dbReference type="KEGG" id="mlo:mll1393"/>
<dbReference type="PATRIC" id="fig|266835.9.peg.1123"/>
<dbReference type="eggNOG" id="COG0384">
    <property type="taxonomic scope" value="Bacteria"/>
</dbReference>
<dbReference type="HOGENOM" id="CLU_048756_0_1_5"/>
<dbReference type="Proteomes" id="UP000000552">
    <property type="component" value="Chromosome"/>
</dbReference>
<dbReference type="GO" id="GO:0005737">
    <property type="term" value="C:cytoplasm"/>
    <property type="evidence" value="ECO:0007669"/>
    <property type="project" value="TreeGrafter"/>
</dbReference>
<dbReference type="GO" id="GO:0016853">
    <property type="term" value="F:isomerase activity"/>
    <property type="evidence" value="ECO:0007669"/>
    <property type="project" value="UniProtKB-KW"/>
</dbReference>
<dbReference type="GO" id="GO:0009058">
    <property type="term" value="P:biosynthetic process"/>
    <property type="evidence" value="ECO:0007669"/>
    <property type="project" value="InterPro"/>
</dbReference>
<dbReference type="Gene3D" id="3.10.310.10">
    <property type="entry name" value="Diaminopimelate Epimerase, Chain A, domain 1"/>
    <property type="match status" value="2"/>
</dbReference>
<dbReference type="InterPro" id="IPR003719">
    <property type="entry name" value="Phenazine_PhzF-like"/>
</dbReference>
<dbReference type="NCBIfam" id="TIGR00654">
    <property type="entry name" value="PhzF_family"/>
    <property type="match status" value="1"/>
</dbReference>
<dbReference type="PANTHER" id="PTHR13774:SF32">
    <property type="entry name" value="ANTISENSE-ENHANCING SEQUENCE 1"/>
    <property type="match status" value="1"/>
</dbReference>
<dbReference type="PANTHER" id="PTHR13774">
    <property type="entry name" value="PHENAZINE BIOSYNTHESIS PROTEIN"/>
    <property type="match status" value="1"/>
</dbReference>
<dbReference type="Pfam" id="PF02567">
    <property type="entry name" value="PhzC-PhzF"/>
    <property type="match status" value="1"/>
</dbReference>
<dbReference type="PIRSF" id="PIRSF016184">
    <property type="entry name" value="PhzC_PhzF"/>
    <property type="match status" value="1"/>
</dbReference>
<dbReference type="SUPFAM" id="SSF54506">
    <property type="entry name" value="Diaminopimelate epimerase-like"/>
    <property type="match status" value="1"/>
</dbReference>
<feature type="chain" id="PRO_0000162400" description="Uncharacterized isomerase mll1393">
    <location>
        <begin position="1"/>
        <end position="302"/>
    </location>
</feature>
<feature type="active site" evidence="1">
    <location>
        <position position="47"/>
    </location>
</feature>
<reference key="1">
    <citation type="journal article" date="2000" name="DNA Res.">
        <title>Complete genome structure of the nitrogen-fixing symbiotic bacterium Mesorhizobium loti.</title>
        <authorList>
            <person name="Kaneko T."/>
            <person name="Nakamura Y."/>
            <person name="Sato S."/>
            <person name="Asamizu E."/>
            <person name="Kato T."/>
            <person name="Sasamoto S."/>
            <person name="Watanabe A."/>
            <person name="Idesawa K."/>
            <person name="Ishikawa A."/>
            <person name="Kawashima K."/>
            <person name="Kimura T."/>
            <person name="Kishida Y."/>
            <person name="Kiyokawa C."/>
            <person name="Kohara M."/>
            <person name="Matsumoto M."/>
            <person name="Matsuno A."/>
            <person name="Mochizuki Y."/>
            <person name="Nakayama S."/>
            <person name="Nakazaki N."/>
            <person name="Shimpo S."/>
            <person name="Sugimoto M."/>
            <person name="Takeuchi C."/>
            <person name="Yamada M."/>
            <person name="Tabata S."/>
        </authorList>
    </citation>
    <scope>NUCLEOTIDE SEQUENCE [LARGE SCALE GENOMIC DNA]</scope>
    <source>
        <strain>LMG 29417 / CECT 9101 / MAFF 303099</strain>
    </source>
</reference>
<organism>
    <name type="scientific">Mesorhizobium japonicum (strain LMG 29417 / CECT 9101 / MAFF 303099)</name>
    <name type="common">Mesorhizobium loti (strain MAFF 303099)</name>
    <dbReference type="NCBI Taxonomy" id="266835"/>
    <lineage>
        <taxon>Bacteria</taxon>
        <taxon>Pseudomonadati</taxon>
        <taxon>Pseudomonadota</taxon>
        <taxon>Alphaproteobacteria</taxon>
        <taxon>Hyphomicrobiales</taxon>
        <taxon>Phyllobacteriaceae</taxon>
        <taxon>Mesorhizobium</taxon>
    </lineage>
</organism>
<comment type="similarity">
    <text evidence="2">Belongs to the PhzF family.</text>
</comment>
<evidence type="ECO:0000250" key="1"/>
<evidence type="ECO:0000305" key="2"/>